<dbReference type="EC" id="2.4.1.18"/>
<dbReference type="EMBL" id="X80009">
    <property type="protein sequence ID" value="CAA56319.1"/>
    <property type="molecule type" value="mRNA"/>
</dbReference>
<dbReference type="PIR" id="T06493">
    <property type="entry name" value="T06493"/>
</dbReference>
<dbReference type="SMR" id="Q41058"/>
<dbReference type="CAZy" id="CBM48">
    <property type="family name" value="Carbohydrate-Binding Module Family 48"/>
</dbReference>
<dbReference type="CAZy" id="GH13">
    <property type="family name" value="Glycoside Hydrolase Family 13"/>
</dbReference>
<dbReference type="EnsemblPlants" id="Psat3g034640.1">
    <property type="protein sequence ID" value="Psat3g034640.1.cds"/>
    <property type="gene ID" value="Psat3g034640"/>
</dbReference>
<dbReference type="Gramene" id="Psat3g034640.1">
    <property type="protein sequence ID" value="Psat3g034640.1.cds"/>
    <property type="gene ID" value="Psat3g034640"/>
</dbReference>
<dbReference type="OrthoDB" id="196493at2759"/>
<dbReference type="UniPathway" id="UPA00152"/>
<dbReference type="GO" id="GO:0009501">
    <property type="term" value="C:amyloplast"/>
    <property type="evidence" value="ECO:0007669"/>
    <property type="project" value="UniProtKB-SubCell"/>
</dbReference>
<dbReference type="GO" id="GO:0009507">
    <property type="term" value="C:chloroplast"/>
    <property type="evidence" value="ECO:0007669"/>
    <property type="project" value="UniProtKB-SubCell"/>
</dbReference>
<dbReference type="GO" id="GO:0003844">
    <property type="term" value="F:1,4-alpha-glucan branching enzyme activity"/>
    <property type="evidence" value="ECO:0000315"/>
    <property type="project" value="UniProtKB"/>
</dbReference>
<dbReference type="GO" id="GO:0043169">
    <property type="term" value="F:cation binding"/>
    <property type="evidence" value="ECO:0007669"/>
    <property type="project" value="InterPro"/>
</dbReference>
<dbReference type="GO" id="GO:0004553">
    <property type="term" value="F:hydrolase activity, hydrolyzing O-glycosyl compounds"/>
    <property type="evidence" value="ECO:0007669"/>
    <property type="project" value="InterPro"/>
</dbReference>
<dbReference type="GO" id="GO:0009793">
    <property type="term" value="P:embryo development ending in seed dormancy"/>
    <property type="evidence" value="ECO:0000315"/>
    <property type="project" value="UniProtKB"/>
</dbReference>
<dbReference type="GO" id="GO:0019252">
    <property type="term" value="P:starch biosynthetic process"/>
    <property type="evidence" value="ECO:0007669"/>
    <property type="project" value="UniProtKB-UniPathway"/>
</dbReference>
<dbReference type="CDD" id="cd11321">
    <property type="entry name" value="AmyAc_bac_euk_BE"/>
    <property type="match status" value="1"/>
</dbReference>
<dbReference type="CDD" id="cd02854">
    <property type="entry name" value="E_set_GBE_euk_N"/>
    <property type="match status" value="1"/>
</dbReference>
<dbReference type="FunFam" id="3.20.20.80:FF:000001">
    <property type="entry name" value="1,4-alpha-glucan branching enzyme"/>
    <property type="match status" value="1"/>
</dbReference>
<dbReference type="FunFam" id="2.60.40.10:FF:000250">
    <property type="entry name" value="1,4-alpha-glucan-branching enzyme, chloroplastic/amyloplastic"/>
    <property type="match status" value="1"/>
</dbReference>
<dbReference type="FunFam" id="2.60.40.1180:FF:000003">
    <property type="entry name" value="1,4-alpha-glucan-branching enzyme, chloroplastic/amyloplastic"/>
    <property type="match status" value="1"/>
</dbReference>
<dbReference type="Gene3D" id="3.20.20.80">
    <property type="entry name" value="Glycosidases"/>
    <property type="match status" value="1"/>
</dbReference>
<dbReference type="Gene3D" id="2.60.40.1180">
    <property type="entry name" value="Golgi alpha-mannosidase II"/>
    <property type="match status" value="1"/>
</dbReference>
<dbReference type="Gene3D" id="2.60.40.10">
    <property type="entry name" value="Immunoglobulins"/>
    <property type="match status" value="1"/>
</dbReference>
<dbReference type="InterPro" id="IPR006048">
    <property type="entry name" value="A-amylase/branching_C"/>
</dbReference>
<dbReference type="InterPro" id="IPR006047">
    <property type="entry name" value="Glyco_hydro_13_cat_dom"/>
</dbReference>
<dbReference type="InterPro" id="IPR004193">
    <property type="entry name" value="Glyco_hydro_13_N"/>
</dbReference>
<dbReference type="InterPro" id="IPR013780">
    <property type="entry name" value="Glyco_hydro_b"/>
</dbReference>
<dbReference type="InterPro" id="IPR017853">
    <property type="entry name" value="Glycoside_hydrolase_SF"/>
</dbReference>
<dbReference type="InterPro" id="IPR013783">
    <property type="entry name" value="Ig-like_fold"/>
</dbReference>
<dbReference type="InterPro" id="IPR014756">
    <property type="entry name" value="Ig_E-set"/>
</dbReference>
<dbReference type="PANTHER" id="PTHR43651">
    <property type="entry name" value="1,4-ALPHA-GLUCAN-BRANCHING ENZYME"/>
    <property type="match status" value="1"/>
</dbReference>
<dbReference type="PANTHER" id="PTHR43651:SF3">
    <property type="entry name" value="1,4-ALPHA-GLUCAN-BRANCHING ENZYME"/>
    <property type="match status" value="1"/>
</dbReference>
<dbReference type="Pfam" id="PF00128">
    <property type="entry name" value="Alpha-amylase"/>
    <property type="match status" value="1"/>
</dbReference>
<dbReference type="Pfam" id="PF02806">
    <property type="entry name" value="Alpha-amylase_C"/>
    <property type="match status" value="1"/>
</dbReference>
<dbReference type="Pfam" id="PF02922">
    <property type="entry name" value="CBM_48"/>
    <property type="match status" value="1"/>
</dbReference>
<dbReference type="SMART" id="SM00642">
    <property type="entry name" value="Aamy"/>
    <property type="match status" value="1"/>
</dbReference>
<dbReference type="SUPFAM" id="SSF51445">
    <property type="entry name" value="(Trans)glycosidases"/>
    <property type="match status" value="1"/>
</dbReference>
<dbReference type="SUPFAM" id="SSF81296">
    <property type="entry name" value="E set domains"/>
    <property type="match status" value="1"/>
</dbReference>
<dbReference type="SUPFAM" id="SSF51011">
    <property type="entry name" value="Glycosyl hydrolase domain"/>
    <property type="match status" value="1"/>
</dbReference>
<protein>
    <recommendedName>
        <fullName>1,4-alpha-glucan-branching enzyme 1, chloroplastic/amyloplastic</fullName>
        <ecNumber>2.4.1.18</ecNumber>
    </recommendedName>
    <alternativeName>
        <fullName>Starch branching enzyme I</fullName>
    </alternativeName>
</protein>
<gene>
    <name type="primary">SBEI</name>
</gene>
<evidence type="ECO:0000250" key="1"/>
<evidence type="ECO:0000256" key="2">
    <source>
        <dbReference type="SAM" id="MobiDB-lite"/>
    </source>
</evidence>
<evidence type="ECO:0000269" key="3">
    <source>
    </source>
</evidence>
<evidence type="ECO:0000269" key="4">
    <source>
    </source>
</evidence>
<evidence type="ECO:0000305" key="5"/>
<evidence type="ECO:0000305" key="6">
    <source>
    </source>
</evidence>
<sequence>MVYTISGIRFPVLPSLHKSTLRCDRRASSHSFFLKNNSSSFSRTSLYAKFSRDSETKSSTIAESDKVLIPEDQDNSVSLADQLENPDITSEDAQNLEDLTMKDGNKYNIDESTSSYREVGDEKGSVTSSSLVDVNTDTQAKKTSVHSDKKVKVDKPKIIPPPGTGQKIYEIDPLLQAHRQHLDFRYGQYKRIREEIDKYEGGLDAFSRGYEKFGFTRSATGITYREWAPGAKSAALVGDFNNWNPNADVMTKDAFGVWEIFLPNNADGSPPIPHGSRVKIHMDTPSGIKDSIPAWIKFSVQAPGEIPYNGIYYDPPEEEKYVFKHPQPKRPQSIRIYESHIGMSSPEPKINTYANFRDDVLPRIKKLGYNAVQIMAIQEHSYYASFGYHVTNFFAPSSRFGTPEDLKSLIDRAHELGLLVLMDIVHSHSSNNTLDGLNMFDGTDGHYFHPGSRGYHWMWDSRLFNYGSWEVLRYLLSNARWWLDEYKFDGFRFDGVTSMMYTHHGLQVSFTGNYSEYFGLATDVEAVVYMMLVNDLIHGLFPEAVSIGEDVSGMPTFCLPTQDGGIGFNYRLHMAVADKWIELLKKQDEDWRMGDIVHTLTNRRWLEKCVVYAESHDQALVGDKTLAFWLMDKDMYDFMALDRPSTPLIDRGIALHKMIRLITMGLGGEGYLNFMGNEFGHPEWIDFPRGEQHLPNGKIVPGNNNSYDKCRRRFDLGDADYLRYHGMQEFDRAMQHLEERYGFMTSEHQYISRKNEGDRVIIFERDNLVFVFNFHWTNSYSDYKVGCLKPGKYKIVLDSDDTLFGGFNRLNHTAEYFTSEGWYDDRPRSFLVYAPSRTAVVYALADGVESEPIELSDGVESEPIELSVGVESEPIELSVEEAESEPIERSVEEVESETTQQSVEVESETTQQSVEVESETTQ</sequence>
<accession>Q41058</accession>
<organism>
    <name type="scientific">Pisum sativum</name>
    <name type="common">Garden pea</name>
    <name type="synonym">Lathyrus oleraceus</name>
    <dbReference type="NCBI Taxonomy" id="3888"/>
    <lineage>
        <taxon>Eukaryota</taxon>
        <taxon>Viridiplantae</taxon>
        <taxon>Streptophyta</taxon>
        <taxon>Embryophyta</taxon>
        <taxon>Tracheophyta</taxon>
        <taxon>Spermatophyta</taxon>
        <taxon>Magnoliopsida</taxon>
        <taxon>eudicotyledons</taxon>
        <taxon>Gunneridae</taxon>
        <taxon>Pentapetalae</taxon>
        <taxon>rosids</taxon>
        <taxon>fabids</taxon>
        <taxon>Fabales</taxon>
        <taxon>Fabaceae</taxon>
        <taxon>Papilionoideae</taxon>
        <taxon>50 kb inversion clade</taxon>
        <taxon>NPAAA clade</taxon>
        <taxon>Hologalegina</taxon>
        <taxon>IRL clade</taxon>
        <taxon>Fabeae</taxon>
        <taxon>Pisum</taxon>
    </lineage>
</organism>
<comment type="function">
    <text evidence="4">Catalyzes the formation of the alpha-1,6-glucosidic linkages in starch by scission of a 1,4-alpha-linked oligosaccharide from growing alpha-1,4-glucan chains and the subsequent attachment of the oligosaccharide to the alpha-1,6 position. May preferentially transfer short chains during branching. Responsible for the synthesis of about 75% of the amylopectin found in the starch granules of mature embryos.</text>
</comment>
<comment type="catalytic activity">
    <reaction evidence="4">
        <text>Transfers a segment of a (1-&gt;4)-alpha-D-glucan chain to a primary hydroxy group in a similar glucan chain.</text>
        <dbReference type="EC" id="2.4.1.18"/>
    </reaction>
</comment>
<comment type="pathway">
    <text>Glycan biosynthesis; starch biosynthesis.</text>
</comment>
<comment type="subunit">
    <text evidence="1">Monomer.</text>
</comment>
<comment type="subcellular location">
    <subcellularLocation>
        <location>Plastid</location>
        <location>Chloroplast</location>
    </subcellularLocation>
    <subcellularLocation>
        <location evidence="5">Plastid</location>
        <location evidence="5">Amyloplast</location>
    </subcellularLocation>
</comment>
<comment type="tissue specificity">
    <text evidence="4">Expressed in roots, leaves, stipules, pods and flowers.</text>
</comment>
<comment type="developmental stage">
    <text evidence="3 4">Highly expressed during early stages of embryo development. Decreasing expression during the embryo maturation.</text>
</comment>
<comment type="disruption phenotype">
    <text evidence="3">Wrinkled seeds.</text>
</comment>
<comment type="miscellaneous">
    <text evidence="6">The wrinkled seeds phenotype (rr) studied by Mendel in 1866 is probably caused by an 800 bp insertion in the SBEI gene, leading to the loss of the last 61 amino acids of the protein and a complete absence of activity.</text>
</comment>
<comment type="similarity">
    <text evidence="5">Belongs to the glycosyl hydrolase 13 family. GlgB subfamily.</text>
</comment>
<comment type="online information" name="Protein Spotlight">
    <link uri="https://www.proteinspotlight.org/back_issues/159/"/>
    <text>On the garden pea - Issue 159 of April 2014</text>
</comment>
<name>GLGB1_PEA</name>
<feature type="transit peptide" description="Chloroplast" evidence="4">
    <location>
        <begin position="1"/>
        <end position="47"/>
    </location>
</feature>
<feature type="chain" id="PRO_5000146301" description="1,4-alpha-glucan-branching enzyme 1, chloroplastic/amyloplastic">
    <location>
        <begin position="48"/>
        <end position="922"/>
    </location>
</feature>
<feature type="region of interest" description="Disordered" evidence="2">
    <location>
        <begin position="83"/>
        <end position="130"/>
    </location>
</feature>
<feature type="region of interest" description="Disordered" evidence="2">
    <location>
        <begin position="870"/>
        <end position="922"/>
    </location>
</feature>
<feature type="compositionally biased region" description="Basic and acidic residues" evidence="2">
    <location>
        <begin position="99"/>
        <end position="109"/>
    </location>
</feature>
<feature type="compositionally biased region" description="Low complexity" evidence="2">
    <location>
        <begin position="897"/>
        <end position="922"/>
    </location>
</feature>
<feature type="active site" description="Nucleophile" evidence="1">
    <location>
        <position position="494"/>
    </location>
</feature>
<feature type="active site" description="Proton donor" evidence="1">
    <location>
        <position position="549"/>
    </location>
</feature>
<keyword id="KW-0035">Amyloplast</keyword>
<keyword id="KW-0150">Chloroplast</keyword>
<keyword id="KW-0903">Direct protein sequencing</keyword>
<keyword id="KW-0934">Plastid</keyword>
<keyword id="KW-0808">Transferase</keyword>
<keyword id="KW-0809">Transit peptide</keyword>
<proteinExistence type="evidence at protein level"/>
<reference key="1">
    <citation type="journal article" date="1995" name="Plant J.">
        <title>Starch branching enzymes belonging to distinct enzyme families are differentially expressed during pea embryo development.</title>
        <authorList>
            <person name="Burton R.A."/>
            <person name="Bewley J.D."/>
            <person name="Smith A.M."/>
            <person name="Bhattacharyya M.K."/>
            <person name="Tatge H."/>
            <person name="Ring S."/>
            <person name="Bull V."/>
            <person name="Hamilton W.D."/>
            <person name="Martin C."/>
        </authorList>
    </citation>
    <scope>NUCLEOTIDE SEQUENCE [MRNA]</scope>
    <scope>PROTEIN SEQUENCE OF 48-65</scope>
    <scope>FUNCTION</scope>
    <scope>CATALYTIC ACTIVITY</scope>
    <scope>DEVELOPMENTAL STAGE</scope>
    <scope>TISSUE SPECIFICITY</scope>
</reference>
<reference key="2">
    <citation type="journal article" date="1990" name="Cell">
        <title>The wrinkled-seed character of pea described by Mendel is caused by a transposon-like insertion in a gene encoding starch-branching enzyme.</title>
        <authorList>
            <person name="Bhattacharyya M.K."/>
            <person name="Smith A.M."/>
            <person name="Ellis T.H."/>
            <person name="Hedley C."/>
            <person name="Martin C."/>
        </authorList>
    </citation>
    <scope>IDENTIFICATION</scope>
    <scope>DEVELOPMENTAL STAGE</scope>
    <scope>DISRUPTION PHENOTYPE</scope>
</reference>